<evidence type="ECO:0000255" key="1">
    <source>
        <dbReference type="HAMAP-Rule" id="MF_00394"/>
    </source>
</evidence>
<accession>B1MZX5</accession>
<organism>
    <name type="scientific">Leuconostoc citreum (strain KM20)</name>
    <dbReference type="NCBI Taxonomy" id="349519"/>
    <lineage>
        <taxon>Bacteria</taxon>
        <taxon>Bacillati</taxon>
        <taxon>Bacillota</taxon>
        <taxon>Bacilli</taxon>
        <taxon>Lactobacillales</taxon>
        <taxon>Lactobacillaceae</taxon>
        <taxon>Leuconostoc</taxon>
    </lineage>
</organism>
<keyword id="KW-0963">Cytoplasm</keyword>
<keyword id="KW-0444">Lipid biosynthesis</keyword>
<keyword id="KW-0443">Lipid metabolism</keyword>
<keyword id="KW-0520">NAD</keyword>
<keyword id="KW-0521">NADP</keyword>
<keyword id="KW-0547">Nucleotide-binding</keyword>
<keyword id="KW-0560">Oxidoreductase</keyword>
<keyword id="KW-0594">Phospholipid biosynthesis</keyword>
<keyword id="KW-1208">Phospholipid metabolism</keyword>
<keyword id="KW-1185">Reference proteome</keyword>
<feature type="chain" id="PRO_1000123163" description="Glycerol-3-phosphate dehydrogenase [NAD(P)+]">
    <location>
        <begin position="1"/>
        <end position="338"/>
    </location>
</feature>
<feature type="active site" description="Proton acceptor" evidence="1">
    <location>
        <position position="195"/>
    </location>
</feature>
<feature type="binding site" evidence="1">
    <location>
        <position position="11"/>
    </location>
    <ligand>
        <name>NADPH</name>
        <dbReference type="ChEBI" id="CHEBI:57783"/>
    </ligand>
</feature>
<feature type="binding site" evidence="1">
    <location>
        <position position="12"/>
    </location>
    <ligand>
        <name>NADPH</name>
        <dbReference type="ChEBI" id="CHEBI:57783"/>
    </ligand>
</feature>
<feature type="binding site" evidence="1">
    <location>
        <position position="32"/>
    </location>
    <ligand>
        <name>NADPH</name>
        <dbReference type="ChEBI" id="CHEBI:57783"/>
    </ligand>
</feature>
<feature type="binding site" evidence="1">
    <location>
        <position position="33"/>
    </location>
    <ligand>
        <name>NADPH</name>
        <dbReference type="ChEBI" id="CHEBI:57783"/>
    </ligand>
</feature>
<feature type="binding site" evidence="1">
    <location>
        <position position="109"/>
    </location>
    <ligand>
        <name>NADPH</name>
        <dbReference type="ChEBI" id="CHEBI:57783"/>
    </ligand>
</feature>
<feature type="binding site" evidence="1">
    <location>
        <position position="109"/>
    </location>
    <ligand>
        <name>sn-glycerol 3-phosphate</name>
        <dbReference type="ChEBI" id="CHEBI:57597"/>
    </ligand>
</feature>
<feature type="binding site" evidence="1">
    <location>
        <position position="140"/>
    </location>
    <ligand>
        <name>sn-glycerol 3-phosphate</name>
        <dbReference type="ChEBI" id="CHEBI:57597"/>
    </ligand>
</feature>
<feature type="binding site" evidence="1">
    <location>
        <position position="142"/>
    </location>
    <ligand>
        <name>sn-glycerol 3-phosphate</name>
        <dbReference type="ChEBI" id="CHEBI:57597"/>
    </ligand>
</feature>
<feature type="binding site" evidence="1">
    <location>
        <position position="144"/>
    </location>
    <ligand>
        <name>NADPH</name>
        <dbReference type="ChEBI" id="CHEBI:57783"/>
    </ligand>
</feature>
<feature type="binding site" evidence="1">
    <location>
        <position position="195"/>
    </location>
    <ligand>
        <name>sn-glycerol 3-phosphate</name>
        <dbReference type="ChEBI" id="CHEBI:57597"/>
    </ligand>
</feature>
<feature type="binding site" evidence="1">
    <location>
        <position position="248"/>
    </location>
    <ligand>
        <name>sn-glycerol 3-phosphate</name>
        <dbReference type="ChEBI" id="CHEBI:57597"/>
    </ligand>
</feature>
<feature type="binding site" evidence="1">
    <location>
        <position position="258"/>
    </location>
    <ligand>
        <name>sn-glycerol 3-phosphate</name>
        <dbReference type="ChEBI" id="CHEBI:57597"/>
    </ligand>
</feature>
<feature type="binding site" evidence="1">
    <location>
        <position position="259"/>
    </location>
    <ligand>
        <name>NADPH</name>
        <dbReference type="ChEBI" id="CHEBI:57783"/>
    </ligand>
</feature>
<feature type="binding site" evidence="1">
    <location>
        <position position="259"/>
    </location>
    <ligand>
        <name>sn-glycerol 3-phosphate</name>
        <dbReference type="ChEBI" id="CHEBI:57597"/>
    </ligand>
</feature>
<feature type="binding site" evidence="1">
    <location>
        <position position="260"/>
    </location>
    <ligand>
        <name>sn-glycerol 3-phosphate</name>
        <dbReference type="ChEBI" id="CHEBI:57597"/>
    </ligand>
</feature>
<feature type="binding site" evidence="1">
    <location>
        <position position="283"/>
    </location>
    <ligand>
        <name>NADPH</name>
        <dbReference type="ChEBI" id="CHEBI:57783"/>
    </ligand>
</feature>
<feature type="binding site" evidence="1">
    <location>
        <position position="285"/>
    </location>
    <ligand>
        <name>NADPH</name>
        <dbReference type="ChEBI" id="CHEBI:57783"/>
    </ligand>
</feature>
<gene>
    <name evidence="1" type="primary">gpsA</name>
    <name type="ordered locus">LCK_01252</name>
</gene>
<protein>
    <recommendedName>
        <fullName evidence="1">Glycerol-3-phosphate dehydrogenase [NAD(P)+]</fullName>
        <ecNumber evidence="1">1.1.1.94</ecNumber>
    </recommendedName>
    <alternativeName>
        <fullName evidence="1">NAD(P)(+)-dependent glycerol-3-phosphate dehydrogenase</fullName>
    </alternativeName>
    <alternativeName>
        <fullName evidence="1">NAD(P)H-dependent dihydroxyacetone-phosphate reductase</fullName>
    </alternativeName>
</protein>
<reference key="1">
    <citation type="journal article" date="2008" name="J. Bacteriol.">
        <title>Complete genome sequence of Leuconostoc citreum KM20.</title>
        <authorList>
            <person name="Kim J.F."/>
            <person name="Jeong H."/>
            <person name="Lee J.-S."/>
            <person name="Choi S.-H."/>
            <person name="Ha M."/>
            <person name="Hur C.-G."/>
            <person name="Kim J.-S."/>
            <person name="Lee S."/>
            <person name="Park H.-S."/>
            <person name="Park Y.-H."/>
            <person name="Oh T.K."/>
        </authorList>
    </citation>
    <scope>NUCLEOTIDE SEQUENCE [LARGE SCALE GENOMIC DNA]</scope>
    <source>
        <strain>KM20</strain>
    </source>
</reference>
<dbReference type="EC" id="1.1.1.94" evidence="1"/>
<dbReference type="EMBL" id="DQ489736">
    <property type="protein sequence ID" value="ACA83077.1"/>
    <property type="molecule type" value="Genomic_DNA"/>
</dbReference>
<dbReference type="RefSeq" id="WP_004907988.1">
    <property type="nucleotide sequence ID" value="NC_010471.1"/>
</dbReference>
<dbReference type="SMR" id="B1MZX5"/>
<dbReference type="STRING" id="349519.LCK_01252"/>
<dbReference type="KEGG" id="lci:LCK_01252"/>
<dbReference type="eggNOG" id="COG0240">
    <property type="taxonomic scope" value="Bacteria"/>
</dbReference>
<dbReference type="HOGENOM" id="CLU_033449_0_2_9"/>
<dbReference type="OrthoDB" id="9812273at2"/>
<dbReference type="UniPathway" id="UPA00940"/>
<dbReference type="Proteomes" id="UP000002166">
    <property type="component" value="Chromosome"/>
</dbReference>
<dbReference type="GO" id="GO:0005829">
    <property type="term" value="C:cytosol"/>
    <property type="evidence" value="ECO:0007669"/>
    <property type="project" value="TreeGrafter"/>
</dbReference>
<dbReference type="GO" id="GO:0047952">
    <property type="term" value="F:glycerol-3-phosphate dehydrogenase [NAD(P)+] activity"/>
    <property type="evidence" value="ECO:0007669"/>
    <property type="project" value="UniProtKB-UniRule"/>
</dbReference>
<dbReference type="GO" id="GO:0051287">
    <property type="term" value="F:NAD binding"/>
    <property type="evidence" value="ECO:0007669"/>
    <property type="project" value="InterPro"/>
</dbReference>
<dbReference type="GO" id="GO:0005975">
    <property type="term" value="P:carbohydrate metabolic process"/>
    <property type="evidence" value="ECO:0007669"/>
    <property type="project" value="InterPro"/>
</dbReference>
<dbReference type="GO" id="GO:0046167">
    <property type="term" value="P:glycerol-3-phosphate biosynthetic process"/>
    <property type="evidence" value="ECO:0007669"/>
    <property type="project" value="UniProtKB-UniRule"/>
</dbReference>
<dbReference type="GO" id="GO:0046168">
    <property type="term" value="P:glycerol-3-phosphate catabolic process"/>
    <property type="evidence" value="ECO:0007669"/>
    <property type="project" value="InterPro"/>
</dbReference>
<dbReference type="GO" id="GO:0006650">
    <property type="term" value="P:glycerophospholipid metabolic process"/>
    <property type="evidence" value="ECO:0007669"/>
    <property type="project" value="UniProtKB-UniRule"/>
</dbReference>
<dbReference type="GO" id="GO:0008654">
    <property type="term" value="P:phospholipid biosynthetic process"/>
    <property type="evidence" value="ECO:0007669"/>
    <property type="project" value="UniProtKB-KW"/>
</dbReference>
<dbReference type="FunFam" id="1.10.1040.10:FF:000001">
    <property type="entry name" value="Glycerol-3-phosphate dehydrogenase [NAD(P)+]"/>
    <property type="match status" value="1"/>
</dbReference>
<dbReference type="FunFam" id="3.40.50.720:FF:000019">
    <property type="entry name" value="Glycerol-3-phosphate dehydrogenase [NAD(P)+]"/>
    <property type="match status" value="1"/>
</dbReference>
<dbReference type="Gene3D" id="1.10.1040.10">
    <property type="entry name" value="N-(1-d-carboxylethyl)-l-norvaline Dehydrogenase, domain 2"/>
    <property type="match status" value="1"/>
</dbReference>
<dbReference type="Gene3D" id="3.40.50.720">
    <property type="entry name" value="NAD(P)-binding Rossmann-like Domain"/>
    <property type="match status" value="1"/>
</dbReference>
<dbReference type="HAMAP" id="MF_00394">
    <property type="entry name" value="NAD_Glyc3P_dehydrog"/>
    <property type="match status" value="1"/>
</dbReference>
<dbReference type="InterPro" id="IPR008927">
    <property type="entry name" value="6-PGluconate_DH-like_C_sf"/>
</dbReference>
<dbReference type="InterPro" id="IPR013328">
    <property type="entry name" value="6PGD_dom2"/>
</dbReference>
<dbReference type="InterPro" id="IPR006168">
    <property type="entry name" value="G3P_DH_NAD-dep"/>
</dbReference>
<dbReference type="InterPro" id="IPR006109">
    <property type="entry name" value="G3P_DH_NAD-dep_C"/>
</dbReference>
<dbReference type="InterPro" id="IPR011128">
    <property type="entry name" value="G3P_DH_NAD-dep_N"/>
</dbReference>
<dbReference type="InterPro" id="IPR036291">
    <property type="entry name" value="NAD(P)-bd_dom_sf"/>
</dbReference>
<dbReference type="NCBIfam" id="NF000940">
    <property type="entry name" value="PRK00094.1-2"/>
    <property type="match status" value="1"/>
</dbReference>
<dbReference type="NCBIfam" id="NF000941">
    <property type="entry name" value="PRK00094.1-3"/>
    <property type="match status" value="1"/>
</dbReference>
<dbReference type="NCBIfam" id="NF000942">
    <property type="entry name" value="PRK00094.1-4"/>
    <property type="match status" value="1"/>
</dbReference>
<dbReference type="PANTHER" id="PTHR11728">
    <property type="entry name" value="GLYCEROL-3-PHOSPHATE DEHYDROGENASE"/>
    <property type="match status" value="1"/>
</dbReference>
<dbReference type="PANTHER" id="PTHR11728:SF1">
    <property type="entry name" value="GLYCEROL-3-PHOSPHATE DEHYDROGENASE [NAD(+)] 2, CHLOROPLASTIC"/>
    <property type="match status" value="1"/>
</dbReference>
<dbReference type="Pfam" id="PF07479">
    <property type="entry name" value="NAD_Gly3P_dh_C"/>
    <property type="match status" value="1"/>
</dbReference>
<dbReference type="Pfam" id="PF01210">
    <property type="entry name" value="NAD_Gly3P_dh_N"/>
    <property type="match status" value="1"/>
</dbReference>
<dbReference type="PIRSF" id="PIRSF000114">
    <property type="entry name" value="Glycerol-3-P_dh"/>
    <property type="match status" value="1"/>
</dbReference>
<dbReference type="PRINTS" id="PR00077">
    <property type="entry name" value="GPDHDRGNASE"/>
</dbReference>
<dbReference type="SUPFAM" id="SSF48179">
    <property type="entry name" value="6-phosphogluconate dehydrogenase C-terminal domain-like"/>
    <property type="match status" value="1"/>
</dbReference>
<dbReference type="SUPFAM" id="SSF51735">
    <property type="entry name" value="NAD(P)-binding Rossmann-fold domains"/>
    <property type="match status" value="1"/>
</dbReference>
<dbReference type="PROSITE" id="PS00957">
    <property type="entry name" value="NAD_G3PDH"/>
    <property type="match status" value="1"/>
</dbReference>
<name>GPDA_LEUCK</name>
<sequence length="338" mass="36390">MTKIAVLGAGSWGTALANTAAENGHDVRLWTHHSDQAVEINHNKTNTKYLPDATLSEQLFATDDMAVAVKDSDIVLCVVPTKAVREVAKQLADTLAQLNHQVILAHATKGLEQGTYKRISEMLSEEIPETYRSALVVVSGPSHAEDVIKHDLTAVSIGGSDENATKLLQRVLSNKTFRAYTNHDLLGSELFAALKNIVAIGSGALVGLGYGANAQAALLTRSLVEMRQLGLAMGAQEKTLYELAGIGDLIVTGMSPNSRNYRAGLGLGQGKSLKQVSDDMGMVIEGVNTTKAVYDFSQQYHVDMPITKAIYQVLYDNKPLSEAINDLMSRPLKSEDAL</sequence>
<proteinExistence type="inferred from homology"/>
<comment type="function">
    <text evidence="1">Catalyzes the reduction of the glycolytic intermediate dihydroxyacetone phosphate (DHAP) to sn-glycerol 3-phosphate (G3P), the key precursor for phospholipid synthesis.</text>
</comment>
<comment type="catalytic activity">
    <reaction evidence="1">
        <text>sn-glycerol 3-phosphate + NAD(+) = dihydroxyacetone phosphate + NADH + H(+)</text>
        <dbReference type="Rhea" id="RHEA:11092"/>
        <dbReference type="ChEBI" id="CHEBI:15378"/>
        <dbReference type="ChEBI" id="CHEBI:57540"/>
        <dbReference type="ChEBI" id="CHEBI:57597"/>
        <dbReference type="ChEBI" id="CHEBI:57642"/>
        <dbReference type="ChEBI" id="CHEBI:57945"/>
        <dbReference type="EC" id="1.1.1.94"/>
    </reaction>
    <physiologicalReaction direction="right-to-left" evidence="1">
        <dbReference type="Rhea" id="RHEA:11094"/>
    </physiologicalReaction>
</comment>
<comment type="catalytic activity">
    <reaction evidence="1">
        <text>sn-glycerol 3-phosphate + NADP(+) = dihydroxyacetone phosphate + NADPH + H(+)</text>
        <dbReference type="Rhea" id="RHEA:11096"/>
        <dbReference type="ChEBI" id="CHEBI:15378"/>
        <dbReference type="ChEBI" id="CHEBI:57597"/>
        <dbReference type="ChEBI" id="CHEBI:57642"/>
        <dbReference type="ChEBI" id="CHEBI:57783"/>
        <dbReference type="ChEBI" id="CHEBI:58349"/>
        <dbReference type="EC" id="1.1.1.94"/>
    </reaction>
    <physiologicalReaction direction="right-to-left" evidence="1">
        <dbReference type="Rhea" id="RHEA:11098"/>
    </physiologicalReaction>
</comment>
<comment type="pathway">
    <text evidence="1">Membrane lipid metabolism; glycerophospholipid metabolism.</text>
</comment>
<comment type="subcellular location">
    <subcellularLocation>
        <location evidence="1">Cytoplasm</location>
    </subcellularLocation>
</comment>
<comment type="similarity">
    <text evidence="1">Belongs to the NAD-dependent glycerol-3-phosphate dehydrogenase family.</text>
</comment>